<keyword id="KW-0119">Carbohydrate metabolism</keyword>
<keyword id="KW-0146">Chitin degradation</keyword>
<keyword id="KW-0147">Chitin-binding</keyword>
<keyword id="KW-1015">Disulfide bond</keyword>
<keyword id="KW-0326">Glycosidase</keyword>
<keyword id="KW-0378">Hydrolase</keyword>
<keyword id="KW-0379">Hydroxylation</keyword>
<keyword id="KW-0611">Plant defense</keyword>
<keyword id="KW-0624">Polysaccharide degradation</keyword>
<keyword id="KW-1185">Reference proteome</keyword>
<keyword id="KW-0732">Signal</keyword>
<keyword id="KW-0926">Vacuole</keyword>
<feature type="signal peptide">
    <location>
        <begin position="1"/>
        <end position="23"/>
    </location>
</feature>
<feature type="chain" id="PRO_0000005334" description="Endochitinase 3">
    <location>
        <begin position="24"/>
        <end position="327"/>
    </location>
</feature>
<feature type="propeptide" id="PRO_0000005335" description="Removed in mature form" evidence="5">
    <location>
        <begin position="328"/>
        <end position="334"/>
    </location>
</feature>
<feature type="domain" description="Chitin-binding type-1" evidence="3">
    <location>
        <begin position="24"/>
        <end position="65"/>
    </location>
</feature>
<feature type="region of interest" description="Disordered" evidence="4">
    <location>
        <begin position="64"/>
        <end position="84"/>
    </location>
</feature>
<feature type="compositionally biased region" description="Pro residues" evidence="4">
    <location>
        <begin position="66"/>
        <end position="79"/>
    </location>
</feature>
<feature type="active site" description="Proton donor" evidence="2">
    <location>
        <position position="150"/>
    </location>
</feature>
<feature type="modified residue" description="4-hydroxyproline" evidence="1">
    <location>
        <position position="73"/>
    </location>
</feature>
<feature type="modified residue" description="4-hydroxyproline" evidence="1">
    <location>
        <position position="74"/>
    </location>
</feature>
<feature type="modified residue" description="4-hydroxyproline" evidence="1">
    <location>
        <position position="76"/>
    </location>
</feature>
<feature type="disulfide bond" evidence="3">
    <location>
        <begin position="26"/>
        <end position="41"/>
    </location>
</feature>
<feature type="disulfide bond" evidence="3">
    <location>
        <begin position="35"/>
        <end position="47"/>
    </location>
</feature>
<feature type="disulfide bond" evidence="3">
    <location>
        <begin position="40"/>
        <end position="54"/>
    </location>
</feature>
<feature type="disulfide bond" evidence="3">
    <location>
        <begin position="59"/>
        <end position="63"/>
    </location>
</feature>
<feature type="disulfide bond" evidence="3">
    <location>
        <begin position="106"/>
        <end position="168"/>
    </location>
</feature>
<feature type="disulfide bond" evidence="3">
    <location>
        <begin position="180"/>
        <end position="188"/>
    </location>
</feature>
<feature type="disulfide bond" evidence="3">
    <location>
        <begin position="287"/>
        <end position="319"/>
    </location>
</feature>
<protein>
    <recommendedName>
        <fullName>Endochitinase 3</fullName>
        <ecNumber>3.2.1.14</ecNumber>
    </recommendedName>
</protein>
<organism>
    <name type="scientific">Nicotiana tabacum</name>
    <name type="common">Common tobacco</name>
    <dbReference type="NCBI Taxonomy" id="4097"/>
    <lineage>
        <taxon>Eukaryota</taxon>
        <taxon>Viridiplantae</taxon>
        <taxon>Streptophyta</taxon>
        <taxon>Embryophyta</taxon>
        <taxon>Tracheophyta</taxon>
        <taxon>Spermatophyta</taxon>
        <taxon>Magnoliopsida</taxon>
        <taxon>eudicotyledons</taxon>
        <taxon>Gunneridae</taxon>
        <taxon>Pentapetalae</taxon>
        <taxon>asterids</taxon>
        <taxon>lamiids</taxon>
        <taxon>Solanales</taxon>
        <taxon>Solanaceae</taxon>
        <taxon>Nicotianoideae</taxon>
        <taxon>Nicotianeae</taxon>
        <taxon>Nicotiana</taxon>
    </lineage>
</organism>
<reference key="1">
    <citation type="journal article" date="1992" name="Mol. Gen. Genet.">
        <title>The structure and regulation of homeologous tobacco endochitinase genes of Nicotiana sylvestris and N. tomentosiformis origin.</title>
        <authorList>
            <person name="van Buuren M."/>
            <person name="Neuhaus J.-M."/>
            <person name="Shinshi H."/>
            <person name="Ryals J."/>
            <person name="Meins F. Jr."/>
        </authorList>
    </citation>
    <scope>NUCLEOTIDE SEQUENCE [GENOMIC DNA]</scope>
    <source>
        <strain>cv. Havana 425</strain>
        <tissue>Leaf</tissue>
    </source>
</reference>
<gene>
    <name type="primary">CHN14</name>
</gene>
<name>CHI3_TOBAC</name>
<accession>P29059</accession>
<evidence type="ECO:0000250" key="1"/>
<evidence type="ECO:0000250" key="2">
    <source>
        <dbReference type="UniProtKB" id="P29022"/>
    </source>
</evidence>
<evidence type="ECO:0000255" key="3">
    <source>
        <dbReference type="PROSITE-ProRule" id="PRU00261"/>
    </source>
</evidence>
<evidence type="ECO:0000256" key="4">
    <source>
        <dbReference type="SAM" id="MobiDB-lite"/>
    </source>
</evidence>
<evidence type="ECO:0000305" key="5"/>
<comment type="function">
    <text>Defense against chitin-containing fungal pathogens.</text>
</comment>
<comment type="catalytic activity">
    <reaction>
        <text>Random endo-hydrolysis of N-acetyl-beta-D-glucosaminide (1-&gt;4)-beta-linkages in chitin and chitodextrins.</text>
        <dbReference type="EC" id="3.2.1.14"/>
    </reaction>
</comment>
<comment type="subcellular location">
    <subcellularLocation>
        <location evidence="5">Vacuole</location>
    </subcellularLocation>
    <text evidence="5">Vacuolar and protoplast.</text>
</comment>
<comment type="PTM">
    <text evidence="1">The 4-hydroxyproline residues are not glycosylated in this plant vacuolar protein.</text>
</comment>
<comment type="similarity">
    <text evidence="5">Belongs to the glycosyl hydrolase 19 family. Chitinase class I subfamily.</text>
</comment>
<proteinExistence type="inferred from homology"/>
<sequence length="334" mass="36221">MRLLEFTALSSLLVLFLLLAVSAEQCGKQAGGARCPSGMCCSNFGWCGNTQDYCGPGKCQSQCPSGPGPTPRPPTPTPGPSTGDISNIISSSMFDQMLKHRNDNTCQGKSFYTYNAFITAARSFRGFGTTGDTTRRKREVAAFFAQTSHETTGGWDTAPDGRYAWGYCYLREQGNPPSYCVQSSQWPCAPGQKYYGRGPIQISYNYNYGPCGRAIGQNLLNNPDLVATNAVVSFKSAIWFWMTAQSPKPSCHDVITGRWTPSAADRAANRLPGYGVITNIINGGLECGHGSDARVQDRIGFYRRYCSILGVSPGDNIDCGNQKSFNSGLLLETM</sequence>
<dbReference type="EC" id="3.2.1.14"/>
<dbReference type="EMBL" id="X64518">
    <property type="protein sequence ID" value="CAA45821.1"/>
    <property type="molecule type" value="Genomic_DNA"/>
</dbReference>
<dbReference type="PIR" id="S20982">
    <property type="entry name" value="S20982"/>
</dbReference>
<dbReference type="RefSeq" id="XP_016461053.1">
    <property type="nucleotide sequence ID" value="XM_016605567.1"/>
</dbReference>
<dbReference type="SMR" id="P29059"/>
<dbReference type="CAZy" id="CBM18">
    <property type="family name" value="Carbohydrate-Binding Module Family 18"/>
</dbReference>
<dbReference type="CAZy" id="GH19">
    <property type="family name" value="Glycoside Hydrolase Family 19"/>
</dbReference>
<dbReference type="PaxDb" id="4097-P29059"/>
<dbReference type="KEGG" id="nta:107784434"/>
<dbReference type="OMA" id="VDCANQR"/>
<dbReference type="OrthoDB" id="5985073at2759"/>
<dbReference type="PhylomeDB" id="P29059"/>
<dbReference type="Proteomes" id="UP000084051">
    <property type="component" value="Unplaced"/>
</dbReference>
<dbReference type="GO" id="GO:0005773">
    <property type="term" value="C:vacuole"/>
    <property type="evidence" value="ECO:0007669"/>
    <property type="project" value="UniProtKB-SubCell"/>
</dbReference>
<dbReference type="GO" id="GO:0008061">
    <property type="term" value="F:chitin binding"/>
    <property type="evidence" value="ECO:0007669"/>
    <property type="project" value="UniProtKB-KW"/>
</dbReference>
<dbReference type="GO" id="GO:0004568">
    <property type="term" value="F:chitinase activity"/>
    <property type="evidence" value="ECO:0000318"/>
    <property type="project" value="GO_Central"/>
</dbReference>
<dbReference type="GO" id="GO:0008843">
    <property type="term" value="F:endochitinase activity"/>
    <property type="evidence" value="ECO:0007669"/>
    <property type="project" value="UniProtKB-EC"/>
</dbReference>
<dbReference type="GO" id="GO:0016998">
    <property type="term" value="P:cell wall macromolecule catabolic process"/>
    <property type="evidence" value="ECO:0007669"/>
    <property type="project" value="InterPro"/>
</dbReference>
<dbReference type="GO" id="GO:0006032">
    <property type="term" value="P:chitin catabolic process"/>
    <property type="evidence" value="ECO:0007669"/>
    <property type="project" value="UniProtKB-KW"/>
</dbReference>
<dbReference type="GO" id="GO:0006952">
    <property type="term" value="P:defense response"/>
    <property type="evidence" value="ECO:0007669"/>
    <property type="project" value="UniProtKB-KW"/>
</dbReference>
<dbReference type="GO" id="GO:0000272">
    <property type="term" value="P:polysaccharide catabolic process"/>
    <property type="evidence" value="ECO:0007669"/>
    <property type="project" value="UniProtKB-KW"/>
</dbReference>
<dbReference type="CDD" id="cd00325">
    <property type="entry name" value="chitinase_GH19"/>
    <property type="match status" value="1"/>
</dbReference>
<dbReference type="CDD" id="cd06921">
    <property type="entry name" value="ChtBD1_GH19_hevein"/>
    <property type="match status" value="1"/>
</dbReference>
<dbReference type="FunFam" id="3.30.60.10:FF:000001">
    <property type="entry name" value="Basic endochitinase"/>
    <property type="match status" value="1"/>
</dbReference>
<dbReference type="FunFam" id="3.30.20.10:FF:000001">
    <property type="entry name" value="Endochitinase (Chitinase)"/>
    <property type="match status" value="1"/>
</dbReference>
<dbReference type="Gene3D" id="1.10.530.10">
    <property type="match status" value="1"/>
</dbReference>
<dbReference type="Gene3D" id="3.30.20.10">
    <property type="entry name" value="Endochitinase, domain 2"/>
    <property type="match status" value="1"/>
</dbReference>
<dbReference type="Gene3D" id="3.30.60.10">
    <property type="entry name" value="Endochitinase-like"/>
    <property type="match status" value="1"/>
</dbReference>
<dbReference type="InterPro" id="IPR001002">
    <property type="entry name" value="Chitin-bd_1"/>
</dbReference>
<dbReference type="InterPro" id="IPR018371">
    <property type="entry name" value="Chitin-binding_1_CS"/>
</dbReference>
<dbReference type="InterPro" id="IPR036861">
    <property type="entry name" value="Endochitinase-like_sf"/>
</dbReference>
<dbReference type="InterPro" id="IPR016283">
    <property type="entry name" value="Glyco_hydro_19"/>
</dbReference>
<dbReference type="InterPro" id="IPR000726">
    <property type="entry name" value="Glyco_hydro_19_cat"/>
</dbReference>
<dbReference type="InterPro" id="IPR023346">
    <property type="entry name" value="Lysozyme-like_dom_sf"/>
</dbReference>
<dbReference type="PANTHER" id="PTHR22595">
    <property type="entry name" value="CHITINASE-RELATED"/>
    <property type="match status" value="1"/>
</dbReference>
<dbReference type="PANTHER" id="PTHR22595:SF184">
    <property type="entry name" value="ENDOCHITINASE A"/>
    <property type="match status" value="1"/>
</dbReference>
<dbReference type="Pfam" id="PF00187">
    <property type="entry name" value="Chitin_bind_1"/>
    <property type="match status" value="1"/>
</dbReference>
<dbReference type="Pfam" id="PF00182">
    <property type="entry name" value="Glyco_hydro_19"/>
    <property type="match status" value="1"/>
</dbReference>
<dbReference type="PIRSF" id="PIRSF001060">
    <property type="entry name" value="Endochitinase"/>
    <property type="match status" value="1"/>
</dbReference>
<dbReference type="PRINTS" id="PR00451">
    <property type="entry name" value="CHITINBINDNG"/>
</dbReference>
<dbReference type="SMART" id="SM00270">
    <property type="entry name" value="ChtBD1"/>
    <property type="match status" value="1"/>
</dbReference>
<dbReference type="SUPFAM" id="SSF53955">
    <property type="entry name" value="Lysozyme-like"/>
    <property type="match status" value="1"/>
</dbReference>
<dbReference type="SUPFAM" id="SSF57016">
    <property type="entry name" value="Plant lectins/antimicrobial peptides"/>
    <property type="match status" value="1"/>
</dbReference>
<dbReference type="PROSITE" id="PS00026">
    <property type="entry name" value="CHIT_BIND_I_1"/>
    <property type="match status" value="1"/>
</dbReference>
<dbReference type="PROSITE" id="PS50941">
    <property type="entry name" value="CHIT_BIND_I_2"/>
    <property type="match status" value="1"/>
</dbReference>
<dbReference type="PROSITE" id="PS00773">
    <property type="entry name" value="CHITINASE_19_1"/>
    <property type="match status" value="1"/>
</dbReference>
<dbReference type="PROSITE" id="PS00774">
    <property type="entry name" value="CHITINASE_19_2"/>
    <property type="match status" value="1"/>
</dbReference>